<name>RL1_HELHP</name>
<proteinExistence type="inferred from homology"/>
<sequence length="234" mass="24997">MGKKIAKRLQTLQAKVEPQKVYSIQSGVSAVKSLASAKFDETVEVALRLGVDPRHADQMIRGAVVLPHGTGKKVRVAVFAKGIKADEAKNAGADVVGADDLAEEIKNGNINFDMVIATPDMMALVGKVGRILGPKGLMPNPKTGTVTIDVAKAVANAKSGQVNFRVDKKGIIHAPIGKASFNEEKILDNMLELVRAINRLKPTSAKGKYIRSSSLSLTMSPAIKLDSQELMDMK</sequence>
<dbReference type="EMBL" id="AF444004">
    <property type="protein sequence ID" value="AAQ04635.1"/>
    <property type="molecule type" value="Genomic_DNA"/>
</dbReference>
<dbReference type="EMBL" id="AE017125">
    <property type="protein sequence ID" value="AAP76961.1"/>
    <property type="molecule type" value="Genomic_DNA"/>
</dbReference>
<dbReference type="RefSeq" id="WP_011115207.1">
    <property type="nucleotide sequence ID" value="NC_004917.1"/>
</dbReference>
<dbReference type="SMR" id="Q7VJ79"/>
<dbReference type="STRING" id="235279.HH_0364"/>
<dbReference type="KEGG" id="hhe:HH_0364"/>
<dbReference type="eggNOG" id="COG0081">
    <property type="taxonomic scope" value="Bacteria"/>
</dbReference>
<dbReference type="HOGENOM" id="CLU_062853_0_0_7"/>
<dbReference type="OrthoDB" id="9803740at2"/>
<dbReference type="Proteomes" id="UP000002495">
    <property type="component" value="Chromosome"/>
</dbReference>
<dbReference type="GO" id="GO:0022625">
    <property type="term" value="C:cytosolic large ribosomal subunit"/>
    <property type="evidence" value="ECO:0007669"/>
    <property type="project" value="TreeGrafter"/>
</dbReference>
<dbReference type="GO" id="GO:0019843">
    <property type="term" value="F:rRNA binding"/>
    <property type="evidence" value="ECO:0007669"/>
    <property type="project" value="UniProtKB-UniRule"/>
</dbReference>
<dbReference type="GO" id="GO:0003735">
    <property type="term" value="F:structural constituent of ribosome"/>
    <property type="evidence" value="ECO:0007669"/>
    <property type="project" value="InterPro"/>
</dbReference>
<dbReference type="GO" id="GO:0000049">
    <property type="term" value="F:tRNA binding"/>
    <property type="evidence" value="ECO:0007669"/>
    <property type="project" value="UniProtKB-KW"/>
</dbReference>
<dbReference type="GO" id="GO:0006417">
    <property type="term" value="P:regulation of translation"/>
    <property type="evidence" value="ECO:0007669"/>
    <property type="project" value="UniProtKB-KW"/>
</dbReference>
<dbReference type="GO" id="GO:0006412">
    <property type="term" value="P:translation"/>
    <property type="evidence" value="ECO:0007669"/>
    <property type="project" value="UniProtKB-UniRule"/>
</dbReference>
<dbReference type="CDD" id="cd00403">
    <property type="entry name" value="Ribosomal_L1"/>
    <property type="match status" value="1"/>
</dbReference>
<dbReference type="FunFam" id="3.40.50.790:FF:000001">
    <property type="entry name" value="50S ribosomal protein L1"/>
    <property type="match status" value="1"/>
</dbReference>
<dbReference type="Gene3D" id="3.30.190.20">
    <property type="match status" value="1"/>
</dbReference>
<dbReference type="Gene3D" id="3.40.50.790">
    <property type="match status" value="1"/>
</dbReference>
<dbReference type="HAMAP" id="MF_01318_B">
    <property type="entry name" value="Ribosomal_uL1_B"/>
    <property type="match status" value="1"/>
</dbReference>
<dbReference type="InterPro" id="IPR005878">
    <property type="entry name" value="Ribosom_uL1_bac-type"/>
</dbReference>
<dbReference type="InterPro" id="IPR002143">
    <property type="entry name" value="Ribosomal_uL1"/>
</dbReference>
<dbReference type="InterPro" id="IPR023674">
    <property type="entry name" value="Ribosomal_uL1-like"/>
</dbReference>
<dbReference type="InterPro" id="IPR028364">
    <property type="entry name" value="Ribosomal_uL1/biogenesis"/>
</dbReference>
<dbReference type="InterPro" id="IPR016095">
    <property type="entry name" value="Ribosomal_uL1_3-a/b-sand"/>
</dbReference>
<dbReference type="InterPro" id="IPR023673">
    <property type="entry name" value="Ribosomal_uL1_CS"/>
</dbReference>
<dbReference type="NCBIfam" id="TIGR01169">
    <property type="entry name" value="rplA_bact"/>
    <property type="match status" value="1"/>
</dbReference>
<dbReference type="PANTHER" id="PTHR36427">
    <property type="entry name" value="54S RIBOSOMAL PROTEIN L1, MITOCHONDRIAL"/>
    <property type="match status" value="1"/>
</dbReference>
<dbReference type="PANTHER" id="PTHR36427:SF3">
    <property type="entry name" value="LARGE RIBOSOMAL SUBUNIT PROTEIN UL1M"/>
    <property type="match status" value="1"/>
</dbReference>
<dbReference type="Pfam" id="PF00687">
    <property type="entry name" value="Ribosomal_L1"/>
    <property type="match status" value="1"/>
</dbReference>
<dbReference type="PIRSF" id="PIRSF002155">
    <property type="entry name" value="Ribosomal_L1"/>
    <property type="match status" value="1"/>
</dbReference>
<dbReference type="SUPFAM" id="SSF56808">
    <property type="entry name" value="Ribosomal protein L1"/>
    <property type="match status" value="1"/>
</dbReference>
<dbReference type="PROSITE" id="PS01199">
    <property type="entry name" value="RIBOSOMAL_L1"/>
    <property type="match status" value="1"/>
</dbReference>
<organism>
    <name type="scientific">Helicobacter hepaticus (strain ATCC 51449 / 3B1)</name>
    <dbReference type="NCBI Taxonomy" id="235279"/>
    <lineage>
        <taxon>Bacteria</taxon>
        <taxon>Pseudomonadati</taxon>
        <taxon>Campylobacterota</taxon>
        <taxon>Epsilonproteobacteria</taxon>
        <taxon>Campylobacterales</taxon>
        <taxon>Helicobacteraceae</taxon>
        <taxon>Helicobacter</taxon>
    </lineage>
</organism>
<evidence type="ECO:0000255" key="1">
    <source>
        <dbReference type="HAMAP-Rule" id="MF_01318"/>
    </source>
</evidence>
<evidence type="ECO:0000305" key="2"/>
<reference key="1">
    <citation type="submission" date="2004-12" db="EMBL/GenBank/DDBJ databases">
        <title>P25, an antigen of Helicobacter hepaticus.</title>
        <authorList>
            <person name="Feng S."/>
            <person name="Hodzic E."/>
            <person name="Barthold S.W."/>
        </authorList>
    </citation>
    <scope>NUCLEOTIDE SEQUENCE [GENOMIC DNA]</scope>
</reference>
<reference key="2">
    <citation type="journal article" date="2003" name="Proc. Natl. Acad. Sci. U.S.A.">
        <title>The complete genome sequence of the carcinogenic bacterium Helicobacter hepaticus.</title>
        <authorList>
            <person name="Suerbaum S."/>
            <person name="Josenhans C."/>
            <person name="Sterzenbach T."/>
            <person name="Drescher B."/>
            <person name="Brandt P."/>
            <person name="Bell M."/>
            <person name="Droege M."/>
            <person name="Fartmann B."/>
            <person name="Fischer H.-P."/>
            <person name="Ge Z."/>
            <person name="Hoerster A."/>
            <person name="Holland R."/>
            <person name="Klein K."/>
            <person name="Koenig J."/>
            <person name="Macko L."/>
            <person name="Mendz G.L."/>
            <person name="Nyakatura G."/>
            <person name="Schauer D.B."/>
            <person name="Shen Z."/>
            <person name="Weber J."/>
            <person name="Frosch M."/>
            <person name="Fox J.G."/>
        </authorList>
    </citation>
    <scope>NUCLEOTIDE SEQUENCE [LARGE SCALE GENOMIC DNA]</scope>
    <source>
        <strain>ATCC 51449 / 3B1</strain>
    </source>
</reference>
<keyword id="KW-1185">Reference proteome</keyword>
<keyword id="KW-0678">Repressor</keyword>
<keyword id="KW-0687">Ribonucleoprotein</keyword>
<keyword id="KW-0689">Ribosomal protein</keyword>
<keyword id="KW-0694">RNA-binding</keyword>
<keyword id="KW-0699">rRNA-binding</keyword>
<keyword id="KW-0810">Translation regulation</keyword>
<keyword id="KW-0820">tRNA-binding</keyword>
<protein>
    <recommendedName>
        <fullName evidence="1">Large ribosomal subunit protein uL1</fullName>
    </recommendedName>
    <alternativeName>
        <fullName evidence="2">50S ribosomal protein L1</fullName>
    </alternativeName>
</protein>
<feature type="chain" id="PRO_0000125666" description="Large ribosomal subunit protein uL1">
    <location>
        <begin position="1"/>
        <end position="234"/>
    </location>
</feature>
<accession>Q7VJ79</accession>
<gene>
    <name evidence="1" type="primary">rplA</name>
    <name type="ordered locus">HH_0364</name>
</gene>
<comment type="function">
    <text evidence="1">Binds directly to 23S rRNA. The L1 stalk is quite mobile in the ribosome, and is involved in E site tRNA release.</text>
</comment>
<comment type="function">
    <text evidence="1">Protein L1 is also a translational repressor protein, it controls the translation of the L11 operon by binding to its mRNA.</text>
</comment>
<comment type="subunit">
    <text evidence="1">Part of the 50S ribosomal subunit.</text>
</comment>
<comment type="similarity">
    <text evidence="1">Belongs to the universal ribosomal protein uL1 family.</text>
</comment>